<name>RISB_BURCM</name>
<accession>Q0BHJ7</accession>
<evidence type="ECO:0000255" key="1">
    <source>
        <dbReference type="HAMAP-Rule" id="MF_00178"/>
    </source>
</evidence>
<evidence type="ECO:0000256" key="2">
    <source>
        <dbReference type="SAM" id="MobiDB-lite"/>
    </source>
</evidence>
<keyword id="KW-0686">Riboflavin biosynthesis</keyword>
<keyword id="KW-0808">Transferase</keyword>
<feature type="chain" id="PRO_1000040378" description="6,7-dimethyl-8-ribityllumazine synthase">
    <location>
        <begin position="1"/>
        <end position="171"/>
    </location>
</feature>
<feature type="region of interest" description="Disordered" evidence="2">
    <location>
        <begin position="150"/>
        <end position="171"/>
    </location>
</feature>
<feature type="compositionally biased region" description="Acidic residues" evidence="2">
    <location>
        <begin position="154"/>
        <end position="171"/>
    </location>
</feature>
<feature type="active site" description="Proton donor" evidence="1">
    <location>
        <position position="90"/>
    </location>
</feature>
<feature type="binding site" evidence="1">
    <location>
        <position position="24"/>
    </location>
    <ligand>
        <name>5-amino-6-(D-ribitylamino)uracil</name>
        <dbReference type="ChEBI" id="CHEBI:15934"/>
    </ligand>
</feature>
<feature type="binding site" evidence="1">
    <location>
        <begin position="58"/>
        <end position="60"/>
    </location>
    <ligand>
        <name>5-amino-6-(D-ribitylamino)uracil</name>
        <dbReference type="ChEBI" id="CHEBI:15934"/>
    </ligand>
</feature>
<feature type="binding site" evidence="1">
    <location>
        <begin position="82"/>
        <end position="84"/>
    </location>
    <ligand>
        <name>5-amino-6-(D-ribitylamino)uracil</name>
        <dbReference type="ChEBI" id="CHEBI:15934"/>
    </ligand>
</feature>
<feature type="binding site" evidence="1">
    <location>
        <begin position="87"/>
        <end position="88"/>
    </location>
    <ligand>
        <name>(2S)-2-hydroxy-3-oxobutyl phosphate</name>
        <dbReference type="ChEBI" id="CHEBI:58830"/>
    </ligand>
</feature>
<feature type="binding site" evidence="1">
    <location>
        <position position="115"/>
    </location>
    <ligand>
        <name>5-amino-6-(D-ribitylamino)uracil</name>
        <dbReference type="ChEBI" id="CHEBI:15934"/>
    </ligand>
</feature>
<feature type="binding site" evidence="1">
    <location>
        <position position="129"/>
    </location>
    <ligand>
        <name>(2S)-2-hydroxy-3-oxobutyl phosphate</name>
        <dbReference type="ChEBI" id="CHEBI:58830"/>
    </ligand>
</feature>
<reference key="1">
    <citation type="submission" date="2006-08" db="EMBL/GenBank/DDBJ databases">
        <title>Complete sequence of chromosome 1 of Burkholderia cepacia AMMD.</title>
        <authorList>
            <person name="Copeland A."/>
            <person name="Lucas S."/>
            <person name="Lapidus A."/>
            <person name="Barry K."/>
            <person name="Detter J.C."/>
            <person name="Glavina del Rio T."/>
            <person name="Hammon N."/>
            <person name="Israni S."/>
            <person name="Pitluck S."/>
            <person name="Bruce D."/>
            <person name="Chain P."/>
            <person name="Malfatti S."/>
            <person name="Shin M."/>
            <person name="Vergez L."/>
            <person name="Schmutz J."/>
            <person name="Larimer F."/>
            <person name="Land M."/>
            <person name="Hauser L."/>
            <person name="Kyrpides N."/>
            <person name="Kim E."/>
            <person name="Parke J."/>
            <person name="Coenye T."/>
            <person name="Konstantinidis K."/>
            <person name="Ramette A."/>
            <person name="Tiedje J."/>
            <person name="Richardson P."/>
        </authorList>
    </citation>
    <scope>NUCLEOTIDE SEQUENCE [LARGE SCALE GENOMIC DNA]</scope>
    <source>
        <strain>ATCC BAA-244 / DSM 16087 / CCUG 44356 / LMG 19182 / AMMD</strain>
    </source>
</reference>
<comment type="function">
    <text evidence="1">Catalyzes the formation of 6,7-dimethyl-8-ribityllumazine by condensation of 5-amino-6-(D-ribitylamino)uracil with 3,4-dihydroxy-2-butanone 4-phosphate. This is the penultimate step in the biosynthesis of riboflavin.</text>
</comment>
<comment type="catalytic activity">
    <reaction evidence="1">
        <text>(2S)-2-hydroxy-3-oxobutyl phosphate + 5-amino-6-(D-ribitylamino)uracil = 6,7-dimethyl-8-(1-D-ribityl)lumazine + phosphate + 2 H2O + H(+)</text>
        <dbReference type="Rhea" id="RHEA:26152"/>
        <dbReference type="ChEBI" id="CHEBI:15377"/>
        <dbReference type="ChEBI" id="CHEBI:15378"/>
        <dbReference type="ChEBI" id="CHEBI:15934"/>
        <dbReference type="ChEBI" id="CHEBI:43474"/>
        <dbReference type="ChEBI" id="CHEBI:58201"/>
        <dbReference type="ChEBI" id="CHEBI:58830"/>
        <dbReference type="EC" id="2.5.1.78"/>
    </reaction>
</comment>
<comment type="pathway">
    <text evidence="1">Cofactor biosynthesis; riboflavin biosynthesis; riboflavin from 2-hydroxy-3-oxobutyl phosphate and 5-amino-6-(D-ribitylamino)uracil: step 1/2.</text>
</comment>
<comment type="similarity">
    <text evidence="1">Belongs to the DMRL synthase family.</text>
</comment>
<gene>
    <name evidence="1" type="primary">ribH</name>
    <name type="ordered locus">Bamb_0817</name>
</gene>
<sequence>MEIGQYQPNLEGDGLRIGIVQSRFNEPVCNGLADACVEELERLGVSGEDVLLVSVPGALEIPLALQKLAESGQFDALIALGAVIRGETYHFELVSNESGAGITRIGLDFNLPIANAVLTTENDEQAVARMTEKGRDAARVAVEMANLTMALDQLGDDEDEEEDEEDEEERA</sequence>
<organism>
    <name type="scientific">Burkholderia ambifaria (strain ATCC BAA-244 / DSM 16087 / CCUG 44356 / LMG 19182 / AMMD)</name>
    <name type="common">Burkholderia cepacia (strain AMMD)</name>
    <dbReference type="NCBI Taxonomy" id="339670"/>
    <lineage>
        <taxon>Bacteria</taxon>
        <taxon>Pseudomonadati</taxon>
        <taxon>Pseudomonadota</taxon>
        <taxon>Betaproteobacteria</taxon>
        <taxon>Burkholderiales</taxon>
        <taxon>Burkholderiaceae</taxon>
        <taxon>Burkholderia</taxon>
        <taxon>Burkholderia cepacia complex</taxon>
    </lineage>
</organism>
<dbReference type="EC" id="2.5.1.78" evidence="1"/>
<dbReference type="EMBL" id="CP000440">
    <property type="protein sequence ID" value="ABI86376.1"/>
    <property type="molecule type" value="Genomic_DNA"/>
</dbReference>
<dbReference type="RefSeq" id="WP_006754953.1">
    <property type="nucleotide sequence ID" value="NZ_CP009798.1"/>
</dbReference>
<dbReference type="SMR" id="Q0BHJ7"/>
<dbReference type="GeneID" id="93083776"/>
<dbReference type="KEGG" id="bam:Bamb_0817"/>
<dbReference type="PATRIC" id="fig|339670.21.peg.768"/>
<dbReference type="eggNOG" id="COG0054">
    <property type="taxonomic scope" value="Bacteria"/>
</dbReference>
<dbReference type="UniPathway" id="UPA00275">
    <property type="reaction ID" value="UER00404"/>
</dbReference>
<dbReference type="Proteomes" id="UP000000662">
    <property type="component" value="Chromosome 1"/>
</dbReference>
<dbReference type="GO" id="GO:0005829">
    <property type="term" value="C:cytosol"/>
    <property type="evidence" value="ECO:0007669"/>
    <property type="project" value="TreeGrafter"/>
</dbReference>
<dbReference type="GO" id="GO:0009349">
    <property type="term" value="C:riboflavin synthase complex"/>
    <property type="evidence" value="ECO:0007669"/>
    <property type="project" value="InterPro"/>
</dbReference>
<dbReference type="GO" id="GO:0000906">
    <property type="term" value="F:6,7-dimethyl-8-ribityllumazine synthase activity"/>
    <property type="evidence" value="ECO:0007669"/>
    <property type="project" value="UniProtKB-UniRule"/>
</dbReference>
<dbReference type="GO" id="GO:0009231">
    <property type="term" value="P:riboflavin biosynthetic process"/>
    <property type="evidence" value="ECO:0007669"/>
    <property type="project" value="UniProtKB-UniRule"/>
</dbReference>
<dbReference type="CDD" id="cd09209">
    <property type="entry name" value="Lumazine_synthase-I"/>
    <property type="match status" value="1"/>
</dbReference>
<dbReference type="Gene3D" id="3.40.50.960">
    <property type="entry name" value="Lumazine/riboflavin synthase"/>
    <property type="match status" value="1"/>
</dbReference>
<dbReference type="HAMAP" id="MF_00178">
    <property type="entry name" value="Lumazine_synth"/>
    <property type="match status" value="1"/>
</dbReference>
<dbReference type="InterPro" id="IPR034964">
    <property type="entry name" value="LS"/>
</dbReference>
<dbReference type="InterPro" id="IPR002180">
    <property type="entry name" value="LS/RS"/>
</dbReference>
<dbReference type="InterPro" id="IPR036467">
    <property type="entry name" value="LS/RS_sf"/>
</dbReference>
<dbReference type="NCBIfam" id="TIGR00114">
    <property type="entry name" value="lumazine-synth"/>
    <property type="match status" value="1"/>
</dbReference>
<dbReference type="PANTHER" id="PTHR21058:SF0">
    <property type="entry name" value="6,7-DIMETHYL-8-RIBITYLLUMAZINE SYNTHASE"/>
    <property type="match status" value="1"/>
</dbReference>
<dbReference type="PANTHER" id="PTHR21058">
    <property type="entry name" value="6,7-DIMETHYL-8-RIBITYLLUMAZINE SYNTHASE DMRL SYNTHASE LUMAZINE SYNTHASE"/>
    <property type="match status" value="1"/>
</dbReference>
<dbReference type="Pfam" id="PF00885">
    <property type="entry name" value="DMRL_synthase"/>
    <property type="match status" value="1"/>
</dbReference>
<dbReference type="SUPFAM" id="SSF52121">
    <property type="entry name" value="Lumazine synthase"/>
    <property type="match status" value="1"/>
</dbReference>
<protein>
    <recommendedName>
        <fullName evidence="1">6,7-dimethyl-8-ribityllumazine synthase</fullName>
        <shortName evidence="1">DMRL synthase</shortName>
        <shortName evidence="1">LS</shortName>
        <shortName evidence="1">Lumazine synthase</shortName>
        <ecNumber evidence="1">2.5.1.78</ecNumber>
    </recommendedName>
</protein>
<proteinExistence type="inferred from homology"/>